<organism>
    <name type="scientific">Ovis aries</name>
    <name type="common">Sheep</name>
    <dbReference type="NCBI Taxonomy" id="9940"/>
    <lineage>
        <taxon>Eukaryota</taxon>
        <taxon>Metazoa</taxon>
        <taxon>Chordata</taxon>
        <taxon>Craniata</taxon>
        <taxon>Vertebrata</taxon>
        <taxon>Euteleostomi</taxon>
        <taxon>Mammalia</taxon>
        <taxon>Eutheria</taxon>
        <taxon>Laurasiatheria</taxon>
        <taxon>Artiodactyla</taxon>
        <taxon>Ruminantia</taxon>
        <taxon>Pecora</taxon>
        <taxon>Bovidae</taxon>
        <taxon>Caprinae</taxon>
        <taxon>Ovis</taxon>
    </lineage>
</organism>
<proteinExistence type="evidence at transcript level"/>
<keyword id="KW-1015">Disulfide bond</keyword>
<keyword id="KW-0325">Glycoprotein</keyword>
<keyword id="KW-0378">Hydrolase</keyword>
<keyword id="KW-0645">Protease</keyword>
<keyword id="KW-1185">Reference proteome</keyword>
<keyword id="KW-0964">Secreted</keyword>
<keyword id="KW-0720">Serine protease</keyword>
<keyword id="KW-0732">Signal</keyword>
<keyword id="KW-0865">Zymogen</keyword>
<evidence type="ECO:0000250" key="1"/>
<evidence type="ECO:0000255" key="2"/>
<evidence type="ECO:0000255" key="3">
    <source>
        <dbReference type="PROSITE-ProRule" id="PRU00274"/>
    </source>
</evidence>
<comment type="function">
    <text>Putative mast cell chymase.</text>
</comment>
<comment type="subcellular location">
    <subcellularLocation>
        <location>Secreted</location>
    </subcellularLocation>
    <subcellularLocation>
        <location>Cytoplasmic granule</location>
    </subcellularLocation>
    <text>Secretory granules.</text>
</comment>
<comment type="similarity">
    <text evidence="3">Belongs to the peptidase S1 family. Granzyme subfamily.</text>
</comment>
<feature type="signal peptide" evidence="2">
    <location>
        <begin position="1"/>
        <end position="19"/>
    </location>
</feature>
<feature type="propeptide" id="PRO_0000027469" description="Activation peptide">
    <location>
        <begin position="20"/>
        <end position="21"/>
    </location>
</feature>
<feature type="chain" id="PRO_0000027470" description="Mast cell protease 2">
    <location>
        <begin position="22"/>
        <end position="246"/>
    </location>
</feature>
<feature type="domain" description="Peptidase S1" evidence="3">
    <location>
        <begin position="22"/>
        <end position="244"/>
    </location>
</feature>
<feature type="active site" description="Charge relay system" evidence="1">
    <location>
        <position position="66"/>
    </location>
</feature>
<feature type="active site" description="Charge relay system" evidence="1">
    <location>
        <position position="109"/>
    </location>
</feature>
<feature type="active site" description="Charge relay system" evidence="1">
    <location>
        <position position="202"/>
    </location>
</feature>
<feature type="glycosylation site" description="N-linked (GlcNAc...) asparagine" evidence="2">
    <location>
        <position position="120"/>
    </location>
</feature>
<feature type="disulfide bond" evidence="3">
    <location>
        <begin position="51"/>
        <end position="67"/>
    </location>
</feature>
<feature type="disulfide bond" evidence="3">
    <location>
        <begin position="143"/>
        <end position="208"/>
    </location>
</feature>
<feature type="disulfide bond" evidence="3">
    <location>
        <begin position="174"/>
        <end position="187"/>
    </location>
</feature>
<name>MCPT2_SHEEP</name>
<dbReference type="EC" id="3.4.21.-"/>
<dbReference type="EMBL" id="Y08133">
    <property type="protein sequence ID" value="CAA69327.1"/>
    <property type="molecule type" value="mRNA"/>
</dbReference>
<dbReference type="RefSeq" id="NP_001116477.1">
    <property type="nucleotide sequence ID" value="NM_001123005.1"/>
</dbReference>
<dbReference type="SMR" id="P79204"/>
<dbReference type="STRING" id="9940.ENSOARP00000004835"/>
<dbReference type="MEROPS" id="S01.140"/>
<dbReference type="PaxDb" id="9940-ENSOARP00000004835"/>
<dbReference type="GeneID" id="101107261"/>
<dbReference type="eggNOG" id="KOG3627">
    <property type="taxonomic scope" value="Eukaryota"/>
</dbReference>
<dbReference type="OrthoDB" id="5565075at2759"/>
<dbReference type="BRENDA" id="3.4.21.39">
    <property type="organism ID" value="2668"/>
</dbReference>
<dbReference type="Proteomes" id="UP000002356">
    <property type="component" value="Unplaced"/>
</dbReference>
<dbReference type="GO" id="GO:0005737">
    <property type="term" value="C:cytoplasm"/>
    <property type="evidence" value="ECO:0007669"/>
    <property type="project" value="TreeGrafter"/>
</dbReference>
<dbReference type="GO" id="GO:0005615">
    <property type="term" value="C:extracellular space"/>
    <property type="evidence" value="ECO:0007669"/>
    <property type="project" value="TreeGrafter"/>
</dbReference>
<dbReference type="GO" id="GO:0043231">
    <property type="term" value="C:intracellular membrane-bounded organelle"/>
    <property type="evidence" value="ECO:0007669"/>
    <property type="project" value="TreeGrafter"/>
</dbReference>
<dbReference type="GO" id="GO:0004252">
    <property type="term" value="F:serine-type endopeptidase activity"/>
    <property type="evidence" value="ECO:0007669"/>
    <property type="project" value="InterPro"/>
</dbReference>
<dbReference type="GO" id="GO:0006508">
    <property type="term" value="P:proteolysis"/>
    <property type="evidence" value="ECO:0007669"/>
    <property type="project" value="UniProtKB-KW"/>
</dbReference>
<dbReference type="CDD" id="cd00190">
    <property type="entry name" value="Tryp_SPc"/>
    <property type="match status" value="1"/>
</dbReference>
<dbReference type="FunFam" id="2.40.10.10:FF:000014">
    <property type="entry name" value="Complement factor D"/>
    <property type="match status" value="1"/>
</dbReference>
<dbReference type="Gene3D" id="2.40.10.10">
    <property type="entry name" value="Trypsin-like serine proteases"/>
    <property type="match status" value="2"/>
</dbReference>
<dbReference type="InterPro" id="IPR009003">
    <property type="entry name" value="Peptidase_S1_PA"/>
</dbReference>
<dbReference type="InterPro" id="IPR043504">
    <property type="entry name" value="Peptidase_S1_PA_chymotrypsin"/>
</dbReference>
<dbReference type="InterPro" id="IPR001314">
    <property type="entry name" value="Peptidase_S1A"/>
</dbReference>
<dbReference type="InterPro" id="IPR001254">
    <property type="entry name" value="Trypsin_dom"/>
</dbReference>
<dbReference type="InterPro" id="IPR018114">
    <property type="entry name" value="TRYPSIN_HIS"/>
</dbReference>
<dbReference type="InterPro" id="IPR033116">
    <property type="entry name" value="TRYPSIN_SER"/>
</dbReference>
<dbReference type="PANTHER" id="PTHR24271:SF24">
    <property type="entry name" value="CHYMASE"/>
    <property type="match status" value="1"/>
</dbReference>
<dbReference type="PANTHER" id="PTHR24271">
    <property type="entry name" value="KALLIKREIN-RELATED"/>
    <property type="match status" value="1"/>
</dbReference>
<dbReference type="Pfam" id="PF00089">
    <property type="entry name" value="Trypsin"/>
    <property type="match status" value="1"/>
</dbReference>
<dbReference type="PRINTS" id="PR00722">
    <property type="entry name" value="CHYMOTRYPSIN"/>
</dbReference>
<dbReference type="SMART" id="SM00020">
    <property type="entry name" value="Tryp_SPc"/>
    <property type="match status" value="1"/>
</dbReference>
<dbReference type="SUPFAM" id="SSF50494">
    <property type="entry name" value="Trypsin-like serine proteases"/>
    <property type="match status" value="1"/>
</dbReference>
<dbReference type="PROSITE" id="PS50240">
    <property type="entry name" value="TRYPSIN_DOM"/>
    <property type="match status" value="1"/>
</dbReference>
<dbReference type="PROSITE" id="PS00134">
    <property type="entry name" value="TRYPSIN_HIS"/>
    <property type="match status" value="1"/>
</dbReference>
<dbReference type="PROSITE" id="PS00135">
    <property type="entry name" value="TRYPSIN_SER"/>
    <property type="match status" value="1"/>
</dbReference>
<accession>P79204</accession>
<sequence>MHRPPLPLVLLLLCCRAQAGEIIGGTESKPHSRPYMAYLEIVTSQEKQVACGGFLIRRDFVLTAAHCAGRSVTVTLGAHNIQKKEDTWQRLEVIKQFPYPKYEPVGVHDIMLLKLKEKANLTLAVGTLPLPPHVTFIRPGRMCQVAGWGRTGVKEPASSTLQEVKLRLMEPRACRHFRAFDHNLQLCVGNPQSTKSAFKGDSGGPLLCAGVAQGIVSYGLSSAKPPAVFTRISPYRPWIDEVLKEN</sequence>
<protein>
    <recommendedName>
        <fullName>Mast cell protease 2</fullName>
        <shortName>sMCP-2</shortName>
        <ecNumber>3.4.21.-</ecNumber>
    </recommendedName>
</protein>
<reference key="1">
    <citation type="submission" date="1996-12" db="EMBL/GenBank/DDBJ databases">
        <title>Sheep mast cell proteinase-2; cDNA sequence and tissue expression.</title>
        <authorList>
            <person name="McAleese S.M."/>
            <person name="Knox D.P."/>
            <person name="Huntley J.F."/>
            <person name="Miller H.R.P."/>
        </authorList>
    </citation>
    <scope>NUCLEOTIDE SEQUENCE [MRNA]</scope>
    <source>
        <tissue>Bone marrow</tissue>
    </source>
</reference>